<gene>
    <name type="primary">alphaTub67C</name>
    <name type="synonym">TubA67C</name>
    <name type="ORF">CG8308</name>
</gene>
<feature type="chain" id="PRO_0000048161" description="Tubulin alpha-4 chain">
    <location>
        <begin position="1"/>
        <end position="462"/>
    </location>
</feature>
<feature type="active site" evidence="1">
    <location>
        <position position="265"/>
    </location>
</feature>
<feature type="binding site" evidence="1">
    <location>
        <position position="11"/>
    </location>
    <ligand>
        <name>GTP</name>
        <dbReference type="ChEBI" id="CHEBI:37565"/>
    </ligand>
</feature>
<feature type="binding site" evidence="1">
    <location>
        <position position="82"/>
    </location>
    <ligand>
        <name>GTP</name>
        <dbReference type="ChEBI" id="CHEBI:37565"/>
    </ligand>
</feature>
<feature type="binding site" evidence="1">
    <location>
        <position position="82"/>
    </location>
    <ligand>
        <name>Mg(2+)</name>
        <dbReference type="ChEBI" id="CHEBI:18420"/>
    </ligand>
</feature>
<feature type="binding site" evidence="1">
    <location>
        <position position="151"/>
    </location>
    <ligand>
        <name>GTP</name>
        <dbReference type="ChEBI" id="CHEBI:37565"/>
    </ligand>
</feature>
<feature type="binding site" evidence="1">
    <location>
        <position position="155"/>
    </location>
    <ligand>
        <name>GTP</name>
        <dbReference type="ChEBI" id="CHEBI:37565"/>
    </ligand>
</feature>
<feature type="binding site" evidence="1">
    <location>
        <position position="156"/>
    </location>
    <ligand>
        <name>GTP</name>
        <dbReference type="ChEBI" id="CHEBI:37565"/>
    </ligand>
</feature>
<feature type="binding site" evidence="1">
    <location>
        <position position="190"/>
    </location>
    <ligand>
        <name>GTP</name>
        <dbReference type="ChEBI" id="CHEBI:37565"/>
    </ligand>
</feature>
<feature type="binding site" evidence="1">
    <location>
        <position position="217"/>
    </location>
    <ligand>
        <name>GTP</name>
        <dbReference type="ChEBI" id="CHEBI:37565"/>
    </ligand>
</feature>
<feature type="binding site" evidence="1">
    <location>
        <position position="239"/>
    </location>
    <ligand>
        <name>GTP</name>
        <dbReference type="ChEBI" id="CHEBI:37565"/>
    </ligand>
</feature>
<evidence type="ECO:0000250" key="1">
    <source>
        <dbReference type="UniProtKB" id="P68363"/>
    </source>
</evidence>
<evidence type="ECO:0000305" key="2"/>
<name>TBA4_DROME</name>
<keyword id="KW-0963">Cytoplasm</keyword>
<keyword id="KW-0206">Cytoskeleton</keyword>
<keyword id="KW-0342">GTP-binding</keyword>
<keyword id="KW-0378">Hydrolase</keyword>
<keyword id="KW-0460">Magnesium</keyword>
<keyword id="KW-0479">Metal-binding</keyword>
<keyword id="KW-0493">Microtubule</keyword>
<keyword id="KW-0547">Nucleotide-binding</keyword>
<keyword id="KW-1185">Reference proteome</keyword>
<comment type="function">
    <text>Tubulin is the major constituent of microtubules, a cylinder consisting of laterally associated linear protofilaments composed of alpha- and beta-tubulin heterodimers. Microtubules grow by the addition of GTP-tubulin dimers to the microtubule end, where a stabilizing cap forms. Below the cap, tubulin dimers are in GDP-bound state, owing to GTPase activity of alpha-tubulin.</text>
</comment>
<comment type="catalytic activity">
    <reaction evidence="1">
        <text>GTP + H2O = GDP + phosphate + H(+)</text>
        <dbReference type="Rhea" id="RHEA:19669"/>
        <dbReference type="ChEBI" id="CHEBI:15377"/>
        <dbReference type="ChEBI" id="CHEBI:15378"/>
        <dbReference type="ChEBI" id="CHEBI:37565"/>
        <dbReference type="ChEBI" id="CHEBI:43474"/>
        <dbReference type="ChEBI" id="CHEBI:58189"/>
    </reaction>
    <physiologicalReaction direction="left-to-right" evidence="1">
        <dbReference type="Rhea" id="RHEA:19670"/>
    </physiologicalReaction>
</comment>
<comment type="cofactor">
    <cofactor evidence="1">
        <name>Mg(2+)</name>
        <dbReference type="ChEBI" id="CHEBI:18420"/>
    </cofactor>
</comment>
<comment type="subunit">
    <text>Dimer of alpha and beta chains. A typical microtubule is a hollow water-filled tube with an outer diameter of 25 nm and an inner diameter of 15 nM. Alpha-beta heterodimers associate head-to-tail to form protofilaments running lengthwise along the microtubule wall with the beta-tubulin subunit facing the microtubule plus end conferring a structural polarity. Microtubules usually have 13 protofilaments but different protofilament numbers can be found in some organisms and specialized cells.</text>
</comment>
<comment type="subcellular location">
    <subcellularLocation>
        <location>Cytoplasm</location>
        <location>Cytoskeleton</location>
    </subcellularLocation>
</comment>
<comment type="similarity">
    <text evidence="2">Belongs to the tubulin family.</text>
</comment>
<proteinExistence type="inferred from homology"/>
<reference key="1">
    <citation type="journal article" date="1986" name="Proc. Natl. Acad. Sci. U.S.A.">
        <title>Tissue-specific and constitutive alpha-tubulin genes of Drosophila melanogaster code for structurally distinct proteins.</title>
        <authorList>
            <person name="Theurkauf W.E."/>
            <person name="Baum H."/>
            <person name="Bo J."/>
            <person name="Wensink P.C."/>
        </authorList>
    </citation>
    <scope>NUCLEOTIDE SEQUENCE [GENOMIC DNA]</scope>
</reference>
<reference key="2">
    <citation type="journal article" date="2000" name="Science">
        <title>The genome sequence of Drosophila melanogaster.</title>
        <authorList>
            <person name="Adams M.D."/>
            <person name="Celniker S.E."/>
            <person name="Holt R.A."/>
            <person name="Evans C.A."/>
            <person name="Gocayne J.D."/>
            <person name="Amanatides P.G."/>
            <person name="Scherer S.E."/>
            <person name="Li P.W."/>
            <person name="Hoskins R.A."/>
            <person name="Galle R.F."/>
            <person name="George R.A."/>
            <person name="Lewis S.E."/>
            <person name="Richards S."/>
            <person name="Ashburner M."/>
            <person name="Henderson S.N."/>
            <person name="Sutton G.G."/>
            <person name="Wortman J.R."/>
            <person name="Yandell M.D."/>
            <person name="Zhang Q."/>
            <person name="Chen L.X."/>
            <person name="Brandon R.C."/>
            <person name="Rogers Y.-H.C."/>
            <person name="Blazej R.G."/>
            <person name="Champe M."/>
            <person name="Pfeiffer B.D."/>
            <person name="Wan K.H."/>
            <person name="Doyle C."/>
            <person name="Baxter E.G."/>
            <person name="Helt G."/>
            <person name="Nelson C.R."/>
            <person name="Miklos G.L.G."/>
            <person name="Abril J.F."/>
            <person name="Agbayani A."/>
            <person name="An H.-J."/>
            <person name="Andrews-Pfannkoch C."/>
            <person name="Baldwin D."/>
            <person name="Ballew R.M."/>
            <person name="Basu A."/>
            <person name="Baxendale J."/>
            <person name="Bayraktaroglu L."/>
            <person name="Beasley E.M."/>
            <person name="Beeson K.Y."/>
            <person name="Benos P.V."/>
            <person name="Berman B.P."/>
            <person name="Bhandari D."/>
            <person name="Bolshakov S."/>
            <person name="Borkova D."/>
            <person name="Botchan M.R."/>
            <person name="Bouck J."/>
            <person name="Brokstein P."/>
            <person name="Brottier P."/>
            <person name="Burtis K.C."/>
            <person name="Busam D.A."/>
            <person name="Butler H."/>
            <person name="Cadieu E."/>
            <person name="Center A."/>
            <person name="Chandra I."/>
            <person name="Cherry J.M."/>
            <person name="Cawley S."/>
            <person name="Dahlke C."/>
            <person name="Davenport L.B."/>
            <person name="Davies P."/>
            <person name="de Pablos B."/>
            <person name="Delcher A."/>
            <person name="Deng Z."/>
            <person name="Mays A.D."/>
            <person name="Dew I."/>
            <person name="Dietz S.M."/>
            <person name="Dodson K."/>
            <person name="Doup L.E."/>
            <person name="Downes M."/>
            <person name="Dugan-Rocha S."/>
            <person name="Dunkov B.C."/>
            <person name="Dunn P."/>
            <person name="Durbin K.J."/>
            <person name="Evangelista C.C."/>
            <person name="Ferraz C."/>
            <person name="Ferriera S."/>
            <person name="Fleischmann W."/>
            <person name="Fosler C."/>
            <person name="Gabrielian A.E."/>
            <person name="Garg N.S."/>
            <person name="Gelbart W.M."/>
            <person name="Glasser K."/>
            <person name="Glodek A."/>
            <person name="Gong F."/>
            <person name="Gorrell J.H."/>
            <person name="Gu Z."/>
            <person name="Guan P."/>
            <person name="Harris M."/>
            <person name="Harris N.L."/>
            <person name="Harvey D.A."/>
            <person name="Heiman T.J."/>
            <person name="Hernandez J.R."/>
            <person name="Houck J."/>
            <person name="Hostin D."/>
            <person name="Houston K.A."/>
            <person name="Howland T.J."/>
            <person name="Wei M.-H."/>
            <person name="Ibegwam C."/>
            <person name="Jalali M."/>
            <person name="Kalush F."/>
            <person name="Karpen G.H."/>
            <person name="Ke Z."/>
            <person name="Kennison J.A."/>
            <person name="Ketchum K.A."/>
            <person name="Kimmel B.E."/>
            <person name="Kodira C.D."/>
            <person name="Kraft C.L."/>
            <person name="Kravitz S."/>
            <person name="Kulp D."/>
            <person name="Lai Z."/>
            <person name="Lasko P."/>
            <person name="Lei Y."/>
            <person name="Levitsky A.A."/>
            <person name="Li J.H."/>
            <person name="Li Z."/>
            <person name="Liang Y."/>
            <person name="Lin X."/>
            <person name="Liu X."/>
            <person name="Mattei B."/>
            <person name="McIntosh T.C."/>
            <person name="McLeod M.P."/>
            <person name="McPherson D."/>
            <person name="Merkulov G."/>
            <person name="Milshina N.V."/>
            <person name="Mobarry C."/>
            <person name="Morris J."/>
            <person name="Moshrefi A."/>
            <person name="Mount S.M."/>
            <person name="Moy M."/>
            <person name="Murphy B."/>
            <person name="Murphy L."/>
            <person name="Muzny D.M."/>
            <person name="Nelson D.L."/>
            <person name="Nelson D.R."/>
            <person name="Nelson K.A."/>
            <person name="Nixon K."/>
            <person name="Nusskern D.R."/>
            <person name="Pacleb J.M."/>
            <person name="Palazzolo M."/>
            <person name="Pittman G.S."/>
            <person name="Pan S."/>
            <person name="Pollard J."/>
            <person name="Puri V."/>
            <person name="Reese M.G."/>
            <person name="Reinert K."/>
            <person name="Remington K."/>
            <person name="Saunders R.D.C."/>
            <person name="Scheeler F."/>
            <person name="Shen H."/>
            <person name="Shue B.C."/>
            <person name="Siden-Kiamos I."/>
            <person name="Simpson M."/>
            <person name="Skupski M.P."/>
            <person name="Smith T.J."/>
            <person name="Spier E."/>
            <person name="Spradling A.C."/>
            <person name="Stapleton M."/>
            <person name="Strong R."/>
            <person name="Sun E."/>
            <person name="Svirskas R."/>
            <person name="Tector C."/>
            <person name="Turner R."/>
            <person name="Venter E."/>
            <person name="Wang A.H."/>
            <person name="Wang X."/>
            <person name="Wang Z.-Y."/>
            <person name="Wassarman D.A."/>
            <person name="Weinstock G.M."/>
            <person name="Weissenbach J."/>
            <person name="Williams S.M."/>
            <person name="Woodage T."/>
            <person name="Worley K.C."/>
            <person name="Wu D."/>
            <person name="Yang S."/>
            <person name="Yao Q.A."/>
            <person name="Ye J."/>
            <person name="Yeh R.-F."/>
            <person name="Zaveri J.S."/>
            <person name="Zhan M."/>
            <person name="Zhang G."/>
            <person name="Zhao Q."/>
            <person name="Zheng L."/>
            <person name="Zheng X.H."/>
            <person name="Zhong F.N."/>
            <person name="Zhong W."/>
            <person name="Zhou X."/>
            <person name="Zhu S.C."/>
            <person name="Zhu X."/>
            <person name="Smith H.O."/>
            <person name="Gibbs R.A."/>
            <person name="Myers E.W."/>
            <person name="Rubin G.M."/>
            <person name="Venter J.C."/>
        </authorList>
    </citation>
    <scope>NUCLEOTIDE SEQUENCE [LARGE SCALE GENOMIC DNA]</scope>
    <source>
        <strain>Berkeley</strain>
    </source>
</reference>
<reference key="3">
    <citation type="journal article" date="2002" name="Genome Biol.">
        <title>Annotation of the Drosophila melanogaster euchromatic genome: a systematic review.</title>
        <authorList>
            <person name="Misra S."/>
            <person name="Crosby M.A."/>
            <person name="Mungall C.J."/>
            <person name="Matthews B.B."/>
            <person name="Campbell K.S."/>
            <person name="Hradecky P."/>
            <person name="Huang Y."/>
            <person name="Kaminker J.S."/>
            <person name="Millburn G.H."/>
            <person name="Prochnik S.E."/>
            <person name="Smith C.D."/>
            <person name="Tupy J.L."/>
            <person name="Whitfield E.J."/>
            <person name="Bayraktaroglu L."/>
            <person name="Berman B.P."/>
            <person name="Bettencourt B.R."/>
            <person name="Celniker S.E."/>
            <person name="de Grey A.D.N.J."/>
            <person name="Drysdale R.A."/>
            <person name="Harris N.L."/>
            <person name="Richter J."/>
            <person name="Russo S."/>
            <person name="Schroeder A.J."/>
            <person name="Shu S.Q."/>
            <person name="Stapleton M."/>
            <person name="Yamada C."/>
            <person name="Ashburner M."/>
            <person name="Gelbart W.M."/>
            <person name="Rubin G.M."/>
            <person name="Lewis S.E."/>
        </authorList>
    </citation>
    <scope>GENOME REANNOTATION</scope>
    <source>
        <strain>Berkeley</strain>
    </source>
</reference>
<protein>
    <recommendedName>
        <fullName>Tubulin alpha-4 chain</fullName>
        <ecNumber evidence="1">3.6.5.-</ecNumber>
    </recommendedName>
</protein>
<organism>
    <name type="scientific">Drosophila melanogaster</name>
    <name type="common">Fruit fly</name>
    <dbReference type="NCBI Taxonomy" id="7227"/>
    <lineage>
        <taxon>Eukaryota</taxon>
        <taxon>Metazoa</taxon>
        <taxon>Ecdysozoa</taxon>
        <taxon>Arthropoda</taxon>
        <taxon>Hexapoda</taxon>
        <taxon>Insecta</taxon>
        <taxon>Pterygota</taxon>
        <taxon>Neoptera</taxon>
        <taxon>Endopterygota</taxon>
        <taxon>Diptera</taxon>
        <taxon>Brachycera</taxon>
        <taxon>Muscomorpha</taxon>
        <taxon>Ephydroidea</taxon>
        <taxon>Drosophilidae</taxon>
        <taxon>Drosophila</taxon>
        <taxon>Sophophora</taxon>
    </lineage>
</organism>
<dbReference type="EC" id="3.6.5.-" evidence="1"/>
<dbReference type="EMBL" id="M14646">
    <property type="protein sequence ID" value="AAA28988.1"/>
    <property type="molecule type" value="Genomic_DNA"/>
</dbReference>
<dbReference type="EMBL" id="AE014296">
    <property type="protein sequence ID" value="AAF50226.2"/>
    <property type="molecule type" value="Genomic_DNA"/>
</dbReference>
<dbReference type="PIR" id="D26488">
    <property type="entry name" value="D26488"/>
</dbReference>
<dbReference type="RefSeq" id="NP_524009.2">
    <property type="nucleotide sequence ID" value="NM_079285.4"/>
</dbReference>
<dbReference type="SMR" id="P06606"/>
<dbReference type="BioGRID" id="64519">
    <property type="interactions" value="12"/>
</dbReference>
<dbReference type="DIP" id="DIP-22438N"/>
<dbReference type="FunCoup" id="P06606">
    <property type="interactions" value="79"/>
</dbReference>
<dbReference type="IntAct" id="P06606">
    <property type="interactions" value="1"/>
</dbReference>
<dbReference type="STRING" id="7227.FBpp0076122"/>
<dbReference type="PaxDb" id="7227-FBpp0076122"/>
<dbReference type="EnsemblMetazoa" id="FBtr0076393">
    <property type="protein sequence ID" value="FBpp0076122"/>
    <property type="gene ID" value="FBgn0087040"/>
</dbReference>
<dbReference type="GeneID" id="39130"/>
<dbReference type="KEGG" id="dme:Dmel_CG8308"/>
<dbReference type="AGR" id="FB:FBgn0087040"/>
<dbReference type="CTD" id="39130"/>
<dbReference type="FlyBase" id="FBgn0087040">
    <property type="gene designation" value="alphaTub67C"/>
</dbReference>
<dbReference type="VEuPathDB" id="VectorBase:FBgn0087040"/>
<dbReference type="eggNOG" id="KOG1376">
    <property type="taxonomic scope" value="Eukaryota"/>
</dbReference>
<dbReference type="GeneTree" id="ENSGT00940000164588"/>
<dbReference type="HOGENOM" id="CLU_015718_0_0_1"/>
<dbReference type="InParanoid" id="P06606"/>
<dbReference type="OMA" id="GINYERP"/>
<dbReference type="OrthoDB" id="1662883at2759"/>
<dbReference type="PhylomeDB" id="P06606"/>
<dbReference type="Reactome" id="R-DME-3371497">
    <property type="pathway name" value="HSP90 chaperone cycle for steroid hormone receptors (SHR) in the presence of ligand"/>
</dbReference>
<dbReference type="Reactome" id="R-DME-6807878">
    <property type="pathway name" value="COPI-mediated anterograde transport"/>
</dbReference>
<dbReference type="Reactome" id="R-DME-6811434">
    <property type="pathway name" value="COPI-dependent Golgi-to-ER retrograde traffic"/>
</dbReference>
<dbReference type="Reactome" id="R-DME-6811436">
    <property type="pathway name" value="COPI-independent Golgi-to-ER retrograde traffic"/>
</dbReference>
<dbReference type="Reactome" id="R-DME-983189">
    <property type="pathway name" value="Kinesins"/>
</dbReference>
<dbReference type="BioGRID-ORCS" id="39130">
    <property type="hits" value="0 hits in 3 CRISPR screens"/>
</dbReference>
<dbReference type="GenomeRNAi" id="39130"/>
<dbReference type="PRO" id="PR:P06606"/>
<dbReference type="Proteomes" id="UP000000803">
    <property type="component" value="Chromosome 3L"/>
</dbReference>
<dbReference type="Bgee" id="FBgn0087040">
    <property type="expression patterns" value="Expressed in secondary oocyte and 54 other cell types or tissues"/>
</dbReference>
<dbReference type="ExpressionAtlas" id="P06606">
    <property type="expression patterns" value="baseline and differential"/>
</dbReference>
<dbReference type="GO" id="GO:0055028">
    <property type="term" value="C:cortical microtubule"/>
    <property type="evidence" value="ECO:0000314"/>
    <property type="project" value="FlyBase"/>
</dbReference>
<dbReference type="GO" id="GO:0005737">
    <property type="term" value="C:cytoplasm"/>
    <property type="evidence" value="ECO:0007005"/>
    <property type="project" value="FlyBase"/>
</dbReference>
<dbReference type="GO" id="GO:0005874">
    <property type="term" value="C:microtubule"/>
    <property type="evidence" value="ECO:0000318"/>
    <property type="project" value="GO_Central"/>
</dbReference>
<dbReference type="GO" id="GO:0005634">
    <property type="term" value="C:nucleus"/>
    <property type="evidence" value="ECO:0007005"/>
    <property type="project" value="FlyBase"/>
</dbReference>
<dbReference type="GO" id="GO:0048471">
    <property type="term" value="C:perinuclear region of cytoplasm"/>
    <property type="evidence" value="ECO:0000314"/>
    <property type="project" value="FlyBase"/>
</dbReference>
<dbReference type="GO" id="GO:0005886">
    <property type="term" value="C:plasma membrane"/>
    <property type="evidence" value="ECO:0007005"/>
    <property type="project" value="FlyBase"/>
</dbReference>
<dbReference type="GO" id="GO:0005525">
    <property type="term" value="F:GTP binding"/>
    <property type="evidence" value="ECO:0000318"/>
    <property type="project" value="GO_Central"/>
</dbReference>
<dbReference type="GO" id="GO:0016787">
    <property type="term" value="F:hydrolase activity"/>
    <property type="evidence" value="ECO:0007669"/>
    <property type="project" value="UniProtKB-KW"/>
</dbReference>
<dbReference type="GO" id="GO:0046872">
    <property type="term" value="F:metal ion binding"/>
    <property type="evidence" value="ECO:0007669"/>
    <property type="project" value="UniProtKB-KW"/>
</dbReference>
<dbReference type="GO" id="GO:0005200">
    <property type="term" value="F:structural constituent of cytoskeleton"/>
    <property type="evidence" value="ECO:0000318"/>
    <property type="project" value="GO_Central"/>
</dbReference>
<dbReference type="GO" id="GO:0007417">
    <property type="term" value="P:central nervous system development"/>
    <property type="evidence" value="ECO:0000315"/>
    <property type="project" value="FlyBase"/>
</dbReference>
<dbReference type="GO" id="GO:0009792">
    <property type="term" value="P:embryo development ending in birth or egg hatching"/>
    <property type="evidence" value="ECO:0000315"/>
    <property type="project" value="FlyBase"/>
</dbReference>
<dbReference type="GO" id="GO:0040016">
    <property type="term" value="P:embryonic cleavage"/>
    <property type="evidence" value="ECO:0000315"/>
    <property type="project" value="FlyBase"/>
</dbReference>
<dbReference type="GO" id="GO:0035038">
    <property type="term" value="P:female pronucleus assembly"/>
    <property type="evidence" value="ECO:0000315"/>
    <property type="project" value="FlyBase"/>
</dbReference>
<dbReference type="GO" id="GO:0000226">
    <property type="term" value="P:microtubule cytoskeleton organization"/>
    <property type="evidence" value="ECO:0000318"/>
    <property type="project" value="GO_Central"/>
</dbReference>
<dbReference type="GO" id="GO:0000278">
    <property type="term" value="P:mitotic cell cycle"/>
    <property type="evidence" value="ECO:0000318"/>
    <property type="project" value="GO_Central"/>
</dbReference>
<dbReference type="GO" id="GO:0007052">
    <property type="term" value="P:mitotic spindle organization"/>
    <property type="evidence" value="ECO:0000315"/>
    <property type="project" value="FlyBase"/>
</dbReference>
<dbReference type="GO" id="GO:0051028">
    <property type="term" value="P:mRNA transport"/>
    <property type="evidence" value="ECO:0000315"/>
    <property type="project" value="FlyBase"/>
</dbReference>
<dbReference type="GO" id="GO:0000280">
    <property type="term" value="P:nuclear division"/>
    <property type="evidence" value="ECO:0000315"/>
    <property type="project" value="FlyBase"/>
</dbReference>
<dbReference type="GO" id="GO:0007422">
    <property type="term" value="P:peripheral nervous system development"/>
    <property type="evidence" value="ECO:0000315"/>
    <property type="project" value="FlyBase"/>
</dbReference>
<dbReference type="GO" id="GO:0035046">
    <property type="term" value="P:pronuclear migration"/>
    <property type="evidence" value="ECO:0000315"/>
    <property type="project" value="FlyBase"/>
</dbReference>
<dbReference type="GO" id="GO:0035044">
    <property type="term" value="P:sperm aster formation"/>
    <property type="evidence" value="ECO:0000315"/>
    <property type="project" value="FlyBase"/>
</dbReference>
<dbReference type="CDD" id="cd02186">
    <property type="entry name" value="alpha_tubulin"/>
    <property type="match status" value="1"/>
</dbReference>
<dbReference type="FunFam" id="1.10.287.600:FF:000001">
    <property type="entry name" value="Tubulin alpha chain"/>
    <property type="match status" value="1"/>
</dbReference>
<dbReference type="FunFam" id="3.30.1330.20:FF:000001">
    <property type="entry name" value="Tubulin alpha chain"/>
    <property type="match status" value="1"/>
</dbReference>
<dbReference type="FunFam" id="3.40.50.1440:FF:000011">
    <property type="entry name" value="Tubulin alpha chain"/>
    <property type="match status" value="1"/>
</dbReference>
<dbReference type="Gene3D" id="1.10.287.600">
    <property type="entry name" value="Helix hairpin bin"/>
    <property type="match status" value="1"/>
</dbReference>
<dbReference type="Gene3D" id="3.30.1330.20">
    <property type="entry name" value="Tubulin/FtsZ, C-terminal domain"/>
    <property type="match status" value="1"/>
</dbReference>
<dbReference type="Gene3D" id="3.40.50.1440">
    <property type="entry name" value="Tubulin/FtsZ, GTPase domain"/>
    <property type="match status" value="1"/>
</dbReference>
<dbReference type="InterPro" id="IPR002452">
    <property type="entry name" value="Alpha_tubulin"/>
</dbReference>
<dbReference type="InterPro" id="IPR008280">
    <property type="entry name" value="Tub_FtsZ_C"/>
</dbReference>
<dbReference type="InterPro" id="IPR000217">
    <property type="entry name" value="Tubulin"/>
</dbReference>
<dbReference type="InterPro" id="IPR037103">
    <property type="entry name" value="Tubulin/FtsZ-like_C"/>
</dbReference>
<dbReference type="InterPro" id="IPR018316">
    <property type="entry name" value="Tubulin/FtsZ_2-layer-sand-dom"/>
</dbReference>
<dbReference type="InterPro" id="IPR036525">
    <property type="entry name" value="Tubulin/FtsZ_GTPase_sf"/>
</dbReference>
<dbReference type="InterPro" id="IPR023123">
    <property type="entry name" value="Tubulin_C"/>
</dbReference>
<dbReference type="InterPro" id="IPR017975">
    <property type="entry name" value="Tubulin_CS"/>
</dbReference>
<dbReference type="InterPro" id="IPR003008">
    <property type="entry name" value="Tubulin_FtsZ_GTPase"/>
</dbReference>
<dbReference type="PANTHER" id="PTHR11588">
    <property type="entry name" value="TUBULIN"/>
    <property type="match status" value="1"/>
</dbReference>
<dbReference type="Pfam" id="PF00091">
    <property type="entry name" value="Tubulin"/>
    <property type="match status" value="1"/>
</dbReference>
<dbReference type="Pfam" id="PF03953">
    <property type="entry name" value="Tubulin_C"/>
    <property type="match status" value="1"/>
</dbReference>
<dbReference type="PRINTS" id="PR01162">
    <property type="entry name" value="ALPHATUBULIN"/>
</dbReference>
<dbReference type="PRINTS" id="PR01161">
    <property type="entry name" value="TUBULIN"/>
</dbReference>
<dbReference type="SMART" id="SM00864">
    <property type="entry name" value="Tubulin"/>
    <property type="match status" value="1"/>
</dbReference>
<dbReference type="SMART" id="SM00865">
    <property type="entry name" value="Tubulin_C"/>
    <property type="match status" value="1"/>
</dbReference>
<dbReference type="SUPFAM" id="SSF55307">
    <property type="entry name" value="Tubulin C-terminal domain-like"/>
    <property type="match status" value="1"/>
</dbReference>
<dbReference type="SUPFAM" id="SSF52490">
    <property type="entry name" value="Tubulin nucleotide-binding domain-like"/>
    <property type="match status" value="1"/>
</dbReference>
<dbReference type="PROSITE" id="PS00227">
    <property type="entry name" value="TUBULIN"/>
    <property type="match status" value="1"/>
</dbReference>
<sequence>MREVVSIQIGQCGIQIGNACWELYLLEHGINLDGSLKTKEELTASGSSASVGHDTSANDARTFFTETGNGKQVPRSIFVDLEPTVIDDVRNGCMRELYHPEQLISGKEDAANNYARGRYSIGKEVIDRVTSRLQKIAEQCDSLQGFLIFHSLGGGTGSGFTSLLVERLSTDYSKKCKLDFAVYPSPKVSTAVVEPYNALLTTHSTMDHSDCVFMVDNEAIYDICNNSLGVDRPAYRNLNRLIAQIVSSTTASLRFSGSMNVDLNEFQTNLVPFPRIHFPLVAYAPLMSAERSAHEQHAITTLTNACFESSNMMVKCDPRAGKFMACCMLYRGDVVPKDVNAAVSAIKSKRHIQFVDWCPTGFKIGINYEKPAFVPDGDLAKTSRACCMLSNTTAISVAFSNLSYKFDLMFKKRAFVHWYVGEGMEEGEFTEARENIAVLERDFEEVGLDNAEEGGDEDFDEF</sequence>
<accession>P06606</accession>
<accession>Q9VT30</accession>